<protein>
    <recommendedName>
        <fullName>Putative tyrosine-protein phosphatase OCA1</fullName>
        <ecNumber>3.1.3.48</ecNumber>
    </recommendedName>
</protein>
<sequence>MHRTSIVEELERHQQDQKADQEPGSVSDASNSALQESSDPRLSTTDNTNTPEINVNDQQQEQQVASGEDTDPPSPRMKTIVKPPPIKVVPPLNFGPVERNLYRSGQPEPISFPFLEKLRLRTILWLAVEDPSDNFLAFADDHEIVVHHLGLVTEGTNPWDQLTESSIVAALQIIMDRDSYPLLVCCGMGRHRTGTIVGCLRRLQGWNLASVSEEYRRYAGSRGGRALIELHIEAFDTSRIIVYPESAPEWCSS</sequence>
<dbReference type="EC" id="3.1.3.48"/>
<dbReference type="EMBL" id="CR382131">
    <property type="protein sequence ID" value="CAG79882.1"/>
    <property type="molecule type" value="Genomic_DNA"/>
</dbReference>
<dbReference type="RefSeq" id="XP_504283.1">
    <property type="nucleotide sequence ID" value="XM_504283.1"/>
</dbReference>
<dbReference type="SMR" id="Q6C4X9"/>
<dbReference type="FunCoup" id="Q6C4X9">
    <property type="interactions" value="33"/>
</dbReference>
<dbReference type="STRING" id="284591.Q6C4X9"/>
<dbReference type="EnsemblFungi" id="CAG79882">
    <property type="protein sequence ID" value="CAG79882"/>
    <property type="gene ID" value="YALI0_E22880g"/>
</dbReference>
<dbReference type="KEGG" id="yli:2912916"/>
<dbReference type="VEuPathDB" id="FungiDB:YALI0_E22880g"/>
<dbReference type="HOGENOM" id="CLU_047845_2_1_1"/>
<dbReference type="InParanoid" id="Q6C4X9"/>
<dbReference type="OMA" id="PWNPISE"/>
<dbReference type="OrthoDB" id="117919at4891"/>
<dbReference type="Proteomes" id="UP000001300">
    <property type="component" value="Chromosome E"/>
</dbReference>
<dbReference type="GO" id="GO:0005737">
    <property type="term" value="C:cytoplasm"/>
    <property type="evidence" value="ECO:0007669"/>
    <property type="project" value="UniProtKB-SubCell"/>
</dbReference>
<dbReference type="GO" id="GO:0016791">
    <property type="term" value="F:phosphatase activity"/>
    <property type="evidence" value="ECO:0000318"/>
    <property type="project" value="GO_Central"/>
</dbReference>
<dbReference type="GO" id="GO:0004725">
    <property type="term" value="F:protein tyrosine phosphatase activity"/>
    <property type="evidence" value="ECO:0007669"/>
    <property type="project" value="UniProtKB-EC"/>
</dbReference>
<dbReference type="GO" id="GO:0034599">
    <property type="term" value="P:cellular response to oxidative stress"/>
    <property type="evidence" value="ECO:0007669"/>
    <property type="project" value="EnsemblFungi"/>
</dbReference>
<dbReference type="CDD" id="cd14531">
    <property type="entry name" value="PFA-DSP_Oca1"/>
    <property type="match status" value="1"/>
</dbReference>
<dbReference type="FunFam" id="3.90.190.10:FF:000035">
    <property type="entry name" value="Tyrosine phosphatase, putative"/>
    <property type="match status" value="1"/>
</dbReference>
<dbReference type="Gene3D" id="3.90.190.10">
    <property type="entry name" value="Protein tyrosine phosphatase superfamily"/>
    <property type="match status" value="1"/>
</dbReference>
<dbReference type="InterPro" id="IPR020428">
    <property type="entry name" value="PFA-DSPs"/>
</dbReference>
<dbReference type="InterPro" id="IPR029021">
    <property type="entry name" value="Prot-tyrosine_phosphatase-like"/>
</dbReference>
<dbReference type="InterPro" id="IPR004861">
    <property type="entry name" value="Siw14-like"/>
</dbReference>
<dbReference type="InterPro" id="IPR020422">
    <property type="entry name" value="TYR_PHOSPHATASE_DUAL_dom"/>
</dbReference>
<dbReference type="PANTHER" id="PTHR31126">
    <property type="entry name" value="TYROSINE-PROTEIN PHOSPHATASE"/>
    <property type="match status" value="1"/>
</dbReference>
<dbReference type="PANTHER" id="PTHR31126:SF8">
    <property type="entry name" value="TYROSINE-PROTEIN PHOSPHATASE OCA1-RELATED"/>
    <property type="match status" value="1"/>
</dbReference>
<dbReference type="Pfam" id="PF03162">
    <property type="entry name" value="Y_phosphatase2"/>
    <property type="match status" value="1"/>
</dbReference>
<dbReference type="PRINTS" id="PR01911">
    <property type="entry name" value="PFDSPHPHTASE"/>
</dbReference>
<dbReference type="SUPFAM" id="SSF52799">
    <property type="entry name" value="(Phosphotyrosine protein) phosphatases II"/>
    <property type="match status" value="1"/>
</dbReference>
<dbReference type="PROSITE" id="PS50054">
    <property type="entry name" value="TYR_PHOSPHATASE_DUAL"/>
    <property type="match status" value="1"/>
</dbReference>
<gene>
    <name type="primary">OCA1</name>
    <name type="ordered locus">YALI0E22880g</name>
</gene>
<keyword id="KW-0963">Cytoplasm</keyword>
<keyword id="KW-0378">Hydrolase</keyword>
<keyword id="KW-0904">Protein phosphatase</keyword>
<keyword id="KW-1185">Reference proteome</keyword>
<keyword id="KW-0346">Stress response</keyword>
<proteinExistence type="inferred from homology"/>
<feature type="chain" id="PRO_0000333396" description="Putative tyrosine-protein phosphatase OCA1">
    <location>
        <begin position="1"/>
        <end position="253"/>
    </location>
</feature>
<feature type="domain" description="Tyrosine-protein phosphatase" evidence="2">
    <location>
        <begin position="93"/>
        <end position="249"/>
    </location>
</feature>
<feature type="region of interest" description="Disordered" evidence="3">
    <location>
        <begin position="1"/>
        <end position="84"/>
    </location>
</feature>
<feature type="compositionally biased region" description="Basic and acidic residues" evidence="3">
    <location>
        <begin position="1"/>
        <end position="21"/>
    </location>
</feature>
<feature type="compositionally biased region" description="Polar residues" evidence="3">
    <location>
        <begin position="27"/>
        <end position="65"/>
    </location>
</feature>
<feature type="active site" description="Phosphocysteine intermediate" evidence="2">
    <location>
        <position position="186"/>
    </location>
</feature>
<organism>
    <name type="scientific">Yarrowia lipolytica (strain CLIB 122 / E 150)</name>
    <name type="common">Yeast</name>
    <name type="synonym">Candida lipolytica</name>
    <dbReference type="NCBI Taxonomy" id="284591"/>
    <lineage>
        <taxon>Eukaryota</taxon>
        <taxon>Fungi</taxon>
        <taxon>Dikarya</taxon>
        <taxon>Ascomycota</taxon>
        <taxon>Saccharomycotina</taxon>
        <taxon>Dipodascomycetes</taxon>
        <taxon>Dipodascales</taxon>
        <taxon>Dipodascales incertae sedis</taxon>
        <taxon>Yarrowia</taxon>
    </lineage>
</organism>
<evidence type="ECO:0000250" key="1"/>
<evidence type="ECO:0000255" key="2">
    <source>
        <dbReference type="PROSITE-ProRule" id="PRU00160"/>
    </source>
</evidence>
<evidence type="ECO:0000256" key="3">
    <source>
        <dbReference type="SAM" id="MobiDB-lite"/>
    </source>
</evidence>
<evidence type="ECO:0000305" key="4"/>
<comment type="function">
    <text evidence="1">Putative tyrosine-protein phosphatase required for protection against superoxide stress.</text>
</comment>
<comment type="catalytic activity">
    <reaction>
        <text>O-phospho-L-tyrosyl-[protein] + H2O = L-tyrosyl-[protein] + phosphate</text>
        <dbReference type="Rhea" id="RHEA:10684"/>
        <dbReference type="Rhea" id="RHEA-COMP:10136"/>
        <dbReference type="Rhea" id="RHEA-COMP:20101"/>
        <dbReference type="ChEBI" id="CHEBI:15377"/>
        <dbReference type="ChEBI" id="CHEBI:43474"/>
        <dbReference type="ChEBI" id="CHEBI:46858"/>
        <dbReference type="ChEBI" id="CHEBI:61978"/>
        <dbReference type="EC" id="3.1.3.48"/>
    </reaction>
</comment>
<comment type="subcellular location">
    <subcellularLocation>
        <location evidence="1">Cytoplasm</location>
    </subcellularLocation>
</comment>
<comment type="similarity">
    <text evidence="4">Belongs to the protein-tyrosine phosphatase family.</text>
</comment>
<name>OCA1_YARLI</name>
<reference key="1">
    <citation type="journal article" date="2004" name="Nature">
        <title>Genome evolution in yeasts.</title>
        <authorList>
            <person name="Dujon B."/>
            <person name="Sherman D."/>
            <person name="Fischer G."/>
            <person name="Durrens P."/>
            <person name="Casaregola S."/>
            <person name="Lafontaine I."/>
            <person name="de Montigny J."/>
            <person name="Marck C."/>
            <person name="Neuveglise C."/>
            <person name="Talla E."/>
            <person name="Goffard N."/>
            <person name="Frangeul L."/>
            <person name="Aigle M."/>
            <person name="Anthouard V."/>
            <person name="Babour A."/>
            <person name="Barbe V."/>
            <person name="Barnay S."/>
            <person name="Blanchin S."/>
            <person name="Beckerich J.-M."/>
            <person name="Beyne E."/>
            <person name="Bleykasten C."/>
            <person name="Boisrame A."/>
            <person name="Boyer J."/>
            <person name="Cattolico L."/>
            <person name="Confanioleri F."/>
            <person name="de Daruvar A."/>
            <person name="Despons L."/>
            <person name="Fabre E."/>
            <person name="Fairhead C."/>
            <person name="Ferry-Dumazet H."/>
            <person name="Groppi A."/>
            <person name="Hantraye F."/>
            <person name="Hennequin C."/>
            <person name="Jauniaux N."/>
            <person name="Joyet P."/>
            <person name="Kachouri R."/>
            <person name="Kerrest A."/>
            <person name="Koszul R."/>
            <person name="Lemaire M."/>
            <person name="Lesur I."/>
            <person name="Ma L."/>
            <person name="Muller H."/>
            <person name="Nicaud J.-M."/>
            <person name="Nikolski M."/>
            <person name="Oztas S."/>
            <person name="Ozier-Kalogeropoulos O."/>
            <person name="Pellenz S."/>
            <person name="Potier S."/>
            <person name="Richard G.-F."/>
            <person name="Straub M.-L."/>
            <person name="Suleau A."/>
            <person name="Swennen D."/>
            <person name="Tekaia F."/>
            <person name="Wesolowski-Louvel M."/>
            <person name="Westhof E."/>
            <person name="Wirth B."/>
            <person name="Zeniou-Meyer M."/>
            <person name="Zivanovic Y."/>
            <person name="Bolotin-Fukuhara M."/>
            <person name="Thierry A."/>
            <person name="Bouchier C."/>
            <person name="Caudron B."/>
            <person name="Scarpelli C."/>
            <person name="Gaillardin C."/>
            <person name="Weissenbach J."/>
            <person name="Wincker P."/>
            <person name="Souciet J.-L."/>
        </authorList>
    </citation>
    <scope>NUCLEOTIDE SEQUENCE [LARGE SCALE GENOMIC DNA]</scope>
    <source>
        <strain>CLIB 122 / E 150</strain>
    </source>
</reference>
<accession>Q6C4X9</accession>